<organism>
    <name type="scientific">Klebsiella pneumoniae</name>
    <dbReference type="NCBI Taxonomy" id="573"/>
    <lineage>
        <taxon>Bacteria</taxon>
        <taxon>Pseudomonadati</taxon>
        <taxon>Pseudomonadota</taxon>
        <taxon>Gammaproteobacteria</taxon>
        <taxon>Enterobacterales</taxon>
        <taxon>Enterobacteriaceae</taxon>
        <taxon>Klebsiella/Raoultella group</taxon>
        <taxon>Klebsiella</taxon>
        <taxon>Klebsiella pneumoniae complex</taxon>
    </lineage>
</organism>
<evidence type="ECO:0000250" key="1"/>
<evidence type="ECO:0000255" key="2">
    <source>
        <dbReference type="PROSITE-ProRule" id="PRU00393"/>
    </source>
</evidence>
<evidence type="ECO:0000255" key="3">
    <source>
        <dbReference type="PROSITE-ProRule" id="PRU00394"/>
    </source>
</evidence>
<evidence type="ECO:0000256" key="4">
    <source>
        <dbReference type="SAM" id="MobiDB-lite"/>
    </source>
</evidence>
<keyword id="KW-0238">DNA-binding</keyword>
<keyword id="KW-0678">Repressor</keyword>
<keyword id="KW-0804">Transcription</keyword>
<keyword id="KW-0805">Transcription regulation</keyword>
<protein>
    <recommendedName>
        <fullName>HTH-type transcriptional repressor AllR</fullName>
    </recommendedName>
    <alternativeName>
        <fullName>Negative regulator of allantoin and glyoxylate utilization operons</fullName>
    </alternativeName>
</protein>
<proteinExistence type="inferred from homology"/>
<sequence>MTEVRRRGRPGQQEPSAQKGAQALERGIAILQYLEKSGGSSSVSDISLNLDLPLSTTFRLLKVLEGADFVYQDSQLGWWHIGLGAFNIGSAYIHNRDVLSVGGPFMRRLMLMSGETVNVAIRNGNEAVLIGQQECKSMVRMCAPLGSRLPLHASGAGKALLYPLPAEELVDVIVKTGLQRFTPTTIVDLPVLQRNLDEARACGYSIDQEEHVTGLNCIASAVYDDVGSVVAAISISGPASRLTPDRFVSQGELVRETARNISTALGLKPQAD</sequence>
<reference key="1">
    <citation type="journal article" date="2004" name="Infect. Immun.">
        <title>Isolation of a chromosomal region of Klebsiella pneumoniae associated with allantoin metabolism and liver infection.</title>
        <authorList>
            <person name="Chou H.-C."/>
            <person name="Lee C.-Z."/>
            <person name="Ma L.-C."/>
            <person name="Fang C.-T."/>
            <person name="Chang S.-C."/>
            <person name="Wang J.-T."/>
        </authorList>
    </citation>
    <scope>NUCLEOTIDE SEQUENCE [GENOMIC DNA]</scope>
</reference>
<accession>Q765S0</accession>
<gene>
    <name type="primary">allR</name>
</gene>
<dbReference type="EMBL" id="AB115590">
    <property type="protein sequence ID" value="BAD14990.1"/>
    <property type="molecule type" value="Genomic_DNA"/>
</dbReference>
<dbReference type="RefSeq" id="WP_012737529.1">
    <property type="nucleotide sequence ID" value="NZ_WYAM01000013.1"/>
</dbReference>
<dbReference type="SMR" id="Q765S0"/>
<dbReference type="GeneID" id="69756689"/>
<dbReference type="GO" id="GO:0003677">
    <property type="term" value="F:DNA binding"/>
    <property type="evidence" value="ECO:0007669"/>
    <property type="project" value="UniProtKB-KW"/>
</dbReference>
<dbReference type="GO" id="GO:0003700">
    <property type="term" value="F:DNA-binding transcription factor activity"/>
    <property type="evidence" value="ECO:0007669"/>
    <property type="project" value="TreeGrafter"/>
</dbReference>
<dbReference type="GO" id="GO:0045892">
    <property type="term" value="P:negative regulation of DNA-templated transcription"/>
    <property type="evidence" value="ECO:0007669"/>
    <property type="project" value="TreeGrafter"/>
</dbReference>
<dbReference type="Gene3D" id="3.30.450.40">
    <property type="match status" value="1"/>
</dbReference>
<dbReference type="Gene3D" id="1.10.10.10">
    <property type="entry name" value="Winged helix-like DNA-binding domain superfamily/Winged helix DNA-binding domain"/>
    <property type="match status" value="1"/>
</dbReference>
<dbReference type="InterPro" id="IPR029016">
    <property type="entry name" value="GAF-like_dom_sf"/>
</dbReference>
<dbReference type="InterPro" id="IPR050707">
    <property type="entry name" value="HTH_MetabolicPath_Reg"/>
</dbReference>
<dbReference type="InterPro" id="IPR014757">
    <property type="entry name" value="Tscrpt_reg_IclR_C"/>
</dbReference>
<dbReference type="InterPro" id="IPR005471">
    <property type="entry name" value="Tscrpt_reg_IclR_N"/>
</dbReference>
<dbReference type="InterPro" id="IPR036388">
    <property type="entry name" value="WH-like_DNA-bd_sf"/>
</dbReference>
<dbReference type="InterPro" id="IPR036390">
    <property type="entry name" value="WH_DNA-bd_sf"/>
</dbReference>
<dbReference type="NCBIfam" id="NF007548">
    <property type="entry name" value="PRK10163.1"/>
    <property type="match status" value="1"/>
</dbReference>
<dbReference type="PANTHER" id="PTHR30136">
    <property type="entry name" value="HELIX-TURN-HELIX TRANSCRIPTIONAL REGULATOR, ICLR FAMILY"/>
    <property type="match status" value="1"/>
</dbReference>
<dbReference type="PANTHER" id="PTHR30136:SF24">
    <property type="entry name" value="HTH-TYPE TRANSCRIPTIONAL REPRESSOR ALLR"/>
    <property type="match status" value="1"/>
</dbReference>
<dbReference type="Pfam" id="PF09339">
    <property type="entry name" value="HTH_IclR"/>
    <property type="match status" value="1"/>
</dbReference>
<dbReference type="Pfam" id="PF01614">
    <property type="entry name" value="IclR_C"/>
    <property type="match status" value="1"/>
</dbReference>
<dbReference type="SMART" id="SM00346">
    <property type="entry name" value="HTH_ICLR"/>
    <property type="match status" value="1"/>
</dbReference>
<dbReference type="SUPFAM" id="SSF55781">
    <property type="entry name" value="GAF domain-like"/>
    <property type="match status" value="1"/>
</dbReference>
<dbReference type="SUPFAM" id="SSF46785">
    <property type="entry name" value="Winged helix' DNA-binding domain"/>
    <property type="match status" value="1"/>
</dbReference>
<dbReference type="PROSITE" id="PS51077">
    <property type="entry name" value="HTH_ICLR"/>
    <property type="match status" value="1"/>
</dbReference>
<dbReference type="PROSITE" id="PS51078">
    <property type="entry name" value="ICLR_ED"/>
    <property type="match status" value="1"/>
</dbReference>
<name>ALLR_KLEPN</name>
<feature type="chain" id="PRO_0000313701" description="HTH-type transcriptional repressor AllR">
    <location>
        <begin position="1"/>
        <end position="272"/>
    </location>
</feature>
<feature type="domain" description="HTH iclR-type" evidence="2">
    <location>
        <begin position="21"/>
        <end position="83"/>
    </location>
</feature>
<feature type="domain" description="IclR-ED" evidence="3">
    <location>
        <begin position="98"/>
        <end position="267"/>
    </location>
</feature>
<feature type="DNA-binding region" description="H-T-H motif" evidence="2">
    <location>
        <begin position="43"/>
        <end position="62"/>
    </location>
</feature>
<feature type="region of interest" description="Disordered" evidence="4">
    <location>
        <begin position="1"/>
        <end position="20"/>
    </location>
</feature>
<feature type="binding site" evidence="1">
    <location>
        <begin position="154"/>
        <end position="156"/>
    </location>
    <ligand>
        <name>glyoxylate</name>
        <dbReference type="ChEBI" id="CHEBI:36655"/>
    </ligand>
</feature>
<feature type="binding site" evidence="1">
    <location>
        <position position="207"/>
    </location>
    <ligand>
        <name>glyoxylate</name>
        <dbReference type="ChEBI" id="CHEBI:36655"/>
    </ligand>
</feature>
<feature type="binding site" evidence="1">
    <location>
        <position position="217"/>
    </location>
    <ligand>
        <name>glyoxylate</name>
        <dbReference type="ChEBI" id="CHEBI:36655"/>
    </ligand>
</feature>
<feature type="binding site" evidence="1">
    <location>
        <begin position="234"/>
        <end position="236"/>
    </location>
    <ligand>
        <name>glyoxylate</name>
        <dbReference type="ChEBI" id="CHEBI:36655"/>
    </ligand>
</feature>
<comment type="function">
    <text evidence="1">Negative regulator of allantoin and glyoxylate utilization operons. Binds to the gcl promoter and to the allS-allA intergenic region (By similarity).</text>
</comment>